<comment type="subcellular location">
    <subcellularLocation>
        <location>Plastid</location>
        <location>Chloroplast</location>
    </subcellularLocation>
</comment>
<comment type="similarity">
    <text evidence="1">Belongs to the universal ribosomal protein uS2 family.</text>
</comment>
<protein>
    <recommendedName>
        <fullName evidence="1">Small ribosomal subunit protein uS2c</fullName>
    </recommendedName>
    <alternativeName>
        <fullName>30S ribosomal protein S2, chloroplastic</fullName>
    </alternativeName>
</protein>
<evidence type="ECO:0000305" key="1"/>
<geneLocation type="chloroplast"/>
<gene>
    <name type="primary">rps2</name>
</gene>
<dbReference type="EMBL" id="AJ879453">
    <property type="protein sequence ID" value="CAI53783.1"/>
    <property type="molecule type" value="Genomic_DNA"/>
</dbReference>
<dbReference type="RefSeq" id="YP_319754.1">
    <property type="nucleotide sequence ID" value="NC_007407.1"/>
</dbReference>
<dbReference type="SMR" id="Q3V545"/>
<dbReference type="GeneID" id="3677459"/>
<dbReference type="GO" id="GO:0009507">
    <property type="term" value="C:chloroplast"/>
    <property type="evidence" value="ECO:0007669"/>
    <property type="project" value="UniProtKB-SubCell"/>
</dbReference>
<dbReference type="GO" id="GO:0005763">
    <property type="term" value="C:mitochondrial small ribosomal subunit"/>
    <property type="evidence" value="ECO:0007669"/>
    <property type="project" value="TreeGrafter"/>
</dbReference>
<dbReference type="GO" id="GO:0003735">
    <property type="term" value="F:structural constituent of ribosome"/>
    <property type="evidence" value="ECO:0007669"/>
    <property type="project" value="InterPro"/>
</dbReference>
<dbReference type="GO" id="GO:0006412">
    <property type="term" value="P:translation"/>
    <property type="evidence" value="ECO:0007669"/>
    <property type="project" value="UniProtKB-UniRule"/>
</dbReference>
<dbReference type="CDD" id="cd01425">
    <property type="entry name" value="RPS2"/>
    <property type="match status" value="1"/>
</dbReference>
<dbReference type="FunFam" id="3.40.50.10490:FF:000101">
    <property type="match status" value="1"/>
</dbReference>
<dbReference type="FunFam" id="1.10.287.610:FF:000001">
    <property type="entry name" value="30S ribosomal protein S2"/>
    <property type="match status" value="1"/>
</dbReference>
<dbReference type="Gene3D" id="3.40.50.10490">
    <property type="entry name" value="Glucose-6-phosphate isomerase like protein, domain 1"/>
    <property type="match status" value="1"/>
</dbReference>
<dbReference type="Gene3D" id="1.10.287.610">
    <property type="entry name" value="Helix hairpin bin"/>
    <property type="match status" value="1"/>
</dbReference>
<dbReference type="HAMAP" id="MF_00291_B">
    <property type="entry name" value="Ribosomal_uS2_B"/>
    <property type="match status" value="1"/>
</dbReference>
<dbReference type="InterPro" id="IPR001865">
    <property type="entry name" value="Ribosomal_uS2"/>
</dbReference>
<dbReference type="InterPro" id="IPR005706">
    <property type="entry name" value="Ribosomal_uS2_bac/mit/plastid"/>
</dbReference>
<dbReference type="InterPro" id="IPR018130">
    <property type="entry name" value="Ribosomal_uS2_CS"/>
</dbReference>
<dbReference type="InterPro" id="IPR023591">
    <property type="entry name" value="Ribosomal_uS2_flav_dom_sf"/>
</dbReference>
<dbReference type="NCBIfam" id="TIGR01011">
    <property type="entry name" value="rpsB_bact"/>
    <property type="match status" value="1"/>
</dbReference>
<dbReference type="PANTHER" id="PTHR12534">
    <property type="entry name" value="30S RIBOSOMAL PROTEIN S2 PROKARYOTIC AND ORGANELLAR"/>
    <property type="match status" value="1"/>
</dbReference>
<dbReference type="PANTHER" id="PTHR12534:SF0">
    <property type="entry name" value="SMALL RIBOSOMAL SUBUNIT PROTEIN US2M"/>
    <property type="match status" value="1"/>
</dbReference>
<dbReference type="Pfam" id="PF00318">
    <property type="entry name" value="Ribosomal_S2"/>
    <property type="match status" value="1"/>
</dbReference>
<dbReference type="PRINTS" id="PR00395">
    <property type="entry name" value="RIBOSOMALS2"/>
</dbReference>
<dbReference type="SUPFAM" id="SSF52313">
    <property type="entry name" value="Ribosomal protein S2"/>
    <property type="match status" value="1"/>
</dbReference>
<dbReference type="PROSITE" id="PS00962">
    <property type="entry name" value="RIBOSOMAL_S2_1"/>
    <property type="match status" value="1"/>
</dbReference>
<dbReference type="PROSITE" id="PS00963">
    <property type="entry name" value="RIBOSOMAL_S2_2"/>
    <property type="match status" value="1"/>
</dbReference>
<accession>Q3V545</accession>
<name>RR2_ACOCL</name>
<keyword id="KW-0150">Chloroplast</keyword>
<keyword id="KW-0934">Plastid</keyword>
<keyword id="KW-0687">Ribonucleoprotein</keyword>
<keyword id="KW-0689">Ribosomal protein</keyword>
<feature type="chain" id="PRO_0000352085" description="Small ribosomal subunit protein uS2c">
    <location>
        <begin position="1"/>
        <end position="236"/>
    </location>
</feature>
<proteinExistence type="inferred from homology"/>
<sequence length="236" mass="26531">MTKRYWNINLEEMMEAGVHFGHGTRKWNPRMAPYISAKRKGIHITNLTRTARFLSEACDLLFDAASGGKHFLIVGTKKKAADSVASAAIRARCHYVNKKWLGGMSTNWSTTETRLQNFRDLRAEQKAGKIDRLPKRDAAMLKRQLSTLQTYLGGIKYMTGLPDIVIIVDQQEDYTALRECVILGIPTICLIDTNSDPDLADISIPANDDAIASIRLILNKLVFAICEGRSSYIRNR</sequence>
<organism>
    <name type="scientific">Acorus calamus</name>
    <name type="common">Sweet flag</name>
    <dbReference type="NCBI Taxonomy" id="4465"/>
    <lineage>
        <taxon>Eukaryota</taxon>
        <taxon>Viridiplantae</taxon>
        <taxon>Streptophyta</taxon>
        <taxon>Embryophyta</taxon>
        <taxon>Tracheophyta</taxon>
        <taxon>Spermatophyta</taxon>
        <taxon>Magnoliopsida</taxon>
        <taxon>Liliopsida</taxon>
        <taxon>Acoraceae</taxon>
        <taxon>Acorus</taxon>
    </lineage>
</organism>
<reference key="1">
    <citation type="journal article" date="2005" name="Mol. Biol. Evol.">
        <title>Analysis of Acorus calamus chloroplast genome and its phylogenetic implications.</title>
        <authorList>
            <person name="Goremykin V.V."/>
            <person name="Holland B."/>
            <person name="Hirsch-Ernst K.I."/>
            <person name="Hellwig F.H."/>
        </authorList>
    </citation>
    <scope>NUCLEOTIDE SEQUENCE [LARGE SCALE GENOMIC DNA]</scope>
</reference>